<feature type="chain" id="PRO_0000445594" description="Dolichyl-phosphooligosaccharide-protein glycotransferase 1">
    <location>
        <begin position="1"/>
        <end position="591"/>
    </location>
</feature>
<feature type="topological domain" description="Cytoplasmic" evidence="7">
    <location>
        <begin position="1"/>
        <end position="5"/>
    </location>
</feature>
<feature type="transmembrane region" description="Helical" evidence="4">
    <location>
        <begin position="6"/>
        <end position="26"/>
    </location>
</feature>
<feature type="topological domain" description="Extracellular" evidence="7">
    <location>
        <begin position="27"/>
        <end position="67"/>
    </location>
</feature>
<feature type="transmembrane region" description="Helical" evidence="4">
    <location>
        <begin position="68"/>
        <end position="88"/>
    </location>
</feature>
<feature type="topological domain" description="Cytoplasmic" evidence="7">
    <location>
        <begin position="89"/>
        <end position="91"/>
    </location>
</feature>
<feature type="transmembrane region" description="Helical" evidence="4">
    <location>
        <begin position="92"/>
        <end position="112"/>
    </location>
</feature>
<feature type="topological domain" description="Extracellular" evidence="7">
    <location>
        <begin position="113"/>
        <end position="121"/>
    </location>
</feature>
<feature type="transmembrane region" description="Helical" evidence="4">
    <location>
        <begin position="122"/>
        <end position="142"/>
    </location>
</feature>
<feature type="topological domain" description="Cytoplasmic" evidence="7">
    <location>
        <begin position="143"/>
        <end position="147"/>
    </location>
</feature>
<feature type="transmembrane region" description="Helical" evidence="4">
    <location>
        <begin position="148"/>
        <end position="168"/>
    </location>
</feature>
<feature type="topological domain" description="Extracellular" evidence="7">
    <location>
        <position position="169"/>
    </location>
</feature>
<feature type="transmembrane region" description="Helical" evidence="4">
    <location>
        <begin position="170"/>
        <end position="190"/>
    </location>
</feature>
<feature type="topological domain" description="Cytoplasmic" evidence="7">
    <location>
        <begin position="191"/>
        <end position="219"/>
    </location>
</feature>
<feature type="transmembrane region" description="Helical" evidence="4">
    <location>
        <begin position="220"/>
        <end position="240"/>
    </location>
</feature>
<feature type="topological domain" description="Extracellular" evidence="7">
    <location>
        <begin position="241"/>
        <end position="252"/>
    </location>
</feature>
<feature type="transmembrane region" description="Helical" evidence="4">
    <location>
        <begin position="253"/>
        <end position="273"/>
    </location>
</feature>
<feature type="topological domain" description="Cytoplasmic" evidence="7">
    <location>
        <begin position="274"/>
        <end position="275"/>
    </location>
</feature>
<feature type="transmembrane region" description="Helical" evidence="4">
    <location>
        <begin position="276"/>
        <end position="296"/>
    </location>
</feature>
<feature type="topological domain" description="Extracellular" evidence="7">
    <location>
        <begin position="297"/>
        <end position="303"/>
    </location>
</feature>
<feature type="transmembrane region" description="Helical" evidence="4">
    <location>
        <begin position="304"/>
        <end position="324"/>
    </location>
</feature>
<feature type="topological domain" description="Cytoplasmic" evidence="7">
    <location>
        <begin position="325"/>
        <end position="327"/>
    </location>
</feature>
<feature type="transmembrane region" description="Helical" evidence="4">
    <location>
        <begin position="328"/>
        <end position="344"/>
    </location>
</feature>
<feature type="topological domain" description="Extracellular" evidence="7">
    <location>
        <begin position="345"/>
        <end position="347"/>
    </location>
</feature>
<feature type="transmembrane region" description="Helical" evidence="4">
    <location>
        <begin position="348"/>
        <end position="368"/>
    </location>
</feature>
<feature type="topological domain" description="Cytoplasmic" evidence="7">
    <location>
        <begin position="369"/>
        <end position="408"/>
    </location>
</feature>
<feature type="transmembrane region" description="Helical" evidence="4">
    <location>
        <begin position="409"/>
        <end position="429"/>
    </location>
</feature>
<feature type="topological domain" description="Extracellular" evidence="7">
    <location>
        <begin position="430"/>
        <end position="591"/>
    </location>
</feature>
<feature type="region of interest" description="Interacts with target acceptor peptide in protein substrate" evidence="2">
    <location>
        <begin position="465"/>
        <end position="467"/>
    </location>
</feature>
<feature type="short sequence motif" description="DXD motif 1" evidence="2">
    <location>
        <begin position="34"/>
        <end position="36"/>
    </location>
</feature>
<feature type="short sequence motif" description="DXD motif 2" evidence="2">
    <location>
        <begin position="146"/>
        <end position="148"/>
    </location>
</feature>
<feature type="short sequence motif" description="TIXE motif" evidence="2">
    <location>
        <begin position="295"/>
        <end position="298"/>
    </location>
</feature>
<feature type="short sequence motif" description="WWDYG motif" evidence="8">
    <location>
        <begin position="465"/>
        <end position="469"/>
    </location>
</feature>
<feature type="short sequence motif" description="DKi motif" evidence="8">
    <location>
        <begin position="521"/>
        <end position="535"/>
    </location>
</feature>
<feature type="binding site" evidence="2">
    <location>
        <position position="36"/>
    </location>
    <ligand>
        <name>Mn(2+)</name>
        <dbReference type="ChEBI" id="CHEBI:29035"/>
    </ligand>
</feature>
<feature type="binding site" evidence="2">
    <location>
        <position position="146"/>
    </location>
    <ligand>
        <name>Mn(2+)</name>
        <dbReference type="ChEBI" id="CHEBI:29035"/>
    </ligand>
</feature>
<feature type="binding site" evidence="2">
    <location>
        <position position="147"/>
    </location>
    <ligand>
        <name>a glycophospholipid</name>
        <dbReference type="ChEBI" id="CHEBI:24397"/>
        <note>archaeal dolichyl phosphooligosaccharide</note>
    </ligand>
</feature>
<feature type="binding site" evidence="2">
    <location>
        <position position="148"/>
    </location>
    <ligand>
        <name>Mn(2+)</name>
        <dbReference type="ChEBI" id="CHEBI:29035"/>
    </ligand>
</feature>
<feature type="binding site" evidence="2">
    <location>
        <position position="347"/>
    </location>
    <ligand>
        <name>a glycophospholipid</name>
        <dbReference type="ChEBI" id="CHEBI:24397"/>
        <note>archaeal dolichyl phosphooligosaccharide</note>
    </ligand>
</feature>
<feature type="site" description="Interacts with target acceptor peptide in protein substrate" evidence="1">
    <location>
        <position position="36"/>
    </location>
</feature>
<feature type="site" description="Important for catalytic activity" evidence="1">
    <location>
        <position position="139"/>
    </location>
</feature>
<feature type="site" description="Interacts with target acceptor peptide in protein substrate" evidence="2">
    <location>
        <position position="298"/>
    </location>
</feature>
<feature type="site" description="Interacts with target acceptor peptide in protein substrate" evidence="2">
    <location>
        <position position="531"/>
    </location>
</feature>
<feature type="mutagenesis site" description="Reduces catalytic activity." evidence="5">
    <original>E</original>
    <variation>Q</variation>
    <location>
        <position position="521"/>
    </location>
</feature>
<feature type="mutagenesis site" description="Slightly reduces catalytic activity." evidence="5">
    <original>K</original>
    <variation>A</variation>
    <location>
        <position position="531"/>
    </location>
</feature>
<feature type="mutagenesis site" description="Significantly reduces catalytic activity." evidence="5">
    <original>K</original>
    <variation>R</variation>
    <variation>E</variation>
    <variation>D</variation>
    <location>
        <position position="531"/>
    </location>
</feature>
<feature type="helix" evidence="11">
    <location>
        <begin position="433"/>
        <end position="447"/>
    </location>
</feature>
<feature type="strand" evidence="11">
    <location>
        <begin position="461"/>
        <end position="463"/>
    </location>
</feature>
<feature type="helix" evidence="11">
    <location>
        <begin position="468"/>
        <end position="471"/>
    </location>
</feature>
<feature type="turn" evidence="11">
    <location>
        <begin position="472"/>
        <end position="474"/>
    </location>
</feature>
<feature type="helix" evidence="11">
    <location>
        <begin position="485"/>
        <end position="496"/>
    </location>
</feature>
<feature type="helix" evidence="11">
    <location>
        <begin position="501"/>
        <end position="511"/>
    </location>
</feature>
<feature type="strand" evidence="11">
    <location>
        <begin position="515"/>
        <end position="518"/>
    </location>
</feature>
<feature type="helix" evidence="11">
    <location>
        <begin position="520"/>
        <end position="522"/>
    </location>
</feature>
<feature type="helix" evidence="11">
    <location>
        <begin position="532"/>
        <end position="538"/>
    </location>
</feature>
<feature type="helix" evidence="11">
    <location>
        <begin position="543"/>
        <end position="545"/>
    </location>
</feature>
<feature type="helix" evidence="11">
    <location>
        <begin position="548"/>
        <end position="556"/>
    </location>
</feature>
<feature type="helix" evidence="11">
    <location>
        <begin position="559"/>
        <end position="564"/>
    </location>
</feature>
<feature type="turn" evidence="11">
    <location>
        <begin position="565"/>
        <end position="570"/>
    </location>
</feature>
<feature type="strand" evidence="11">
    <location>
        <begin position="572"/>
        <end position="580"/>
    </location>
</feature>
<feature type="strand" evidence="11">
    <location>
        <begin position="583"/>
        <end position="588"/>
    </location>
</feature>
<reference key="1">
    <citation type="journal article" date="1997" name="Nature">
        <title>The complete genome sequence of the hyperthermophilic, sulphate-reducing archaeon Archaeoglobus fulgidus.</title>
        <authorList>
            <person name="Klenk H.-P."/>
            <person name="Clayton R.A."/>
            <person name="Tomb J.-F."/>
            <person name="White O."/>
            <person name="Nelson K.E."/>
            <person name="Ketchum K.A."/>
            <person name="Dodson R.J."/>
            <person name="Gwinn M.L."/>
            <person name="Hickey E.K."/>
            <person name="Peterson J.D."/>
            <person name="Richardson D.L."/>
            <person name="Kerlavage A.R."/>
            <person name="Graham D.E."/>
            <person name="Kyrpides N.C."/>
            <person name="Fleischmann R.D."/>
            <person name="Quackenbush J."/>
            <person name="Lee N.H."/>
            <person name="Sutton G.G."/>
            <person name="Gill S.R."/>
            <person name="Kirkness E.F."/>
            <person name="Dougherty B.A."/>
            <person name="McKenney K."/>
            <person name="Adams M.D."/>
            <person name="Loftus B.J."/>
            <person name="Peterson S.N."/>
            <person name="Reich C.I."/>
            <person name="McNeil L.K."/>
            <person name="Badger J.H."/>
            <person name="Glodek A."/>
            <person name="Zhou L."/>
            <person name="Overbeek R."/>
            <person name="Gocayne J.D."/>
            <person name="Weidman J.F."/>
            <person name="McDonald L.A."/>
            <person name="Utterback T.R."/>
            <person name="Cotton M.D."/>
            <person name="Spriggs T."/>
            <person name="Artiach P."/>
            <person name="Kaine B.P."/>
            <person name="Sykes S.M."/>
            <person name="Sadow P.W."/>
            <person name="D'Andrea K.P."/>
            <person name="Bowman C."/>
            <person name="Fujii C."/>
            <person name="Garland S.A."/>
            <person name="Mason T.M."/>
            <person name="Olsen G.J."/>
            <person name="Fraser C.M."/>
            <person name="Smith H.O."/>
            <person name="Woese C.R."/>
            <person name="Venter J.C."/>
        </authorList>
    </citation>
    <scope>NUCLEOTIDE SEQUENCE [LARGE SCALE GENOMIC DNA]</scope>
    <source>
        <strain>ATCC 49558 / DSM 4304 / JCM 9628 / NBRC 100126 / VC-16</strain>
    </source>
</reference>
<reference key="2">
    <citation type="journal article" date="2016" name="J. Biol. Chem.">
        <title>Comparative analysis of archaeal lipid-linked oligosaccharides that serve as oligosaccharide donors for Asn glycosylation.</title>
        <authorList>
            <person name="Taguchi Y."/>
            <person name="Fujinami D."/>
            <person name="Kohda D."/>
        </authorList>
    </citation>
    <scope>COMPOSITION OF LIPID-LINKED OLIGOSACCHARIDE</scope>
</reference>
<reference evidence="10" key="3">
    <citation type="journal article" date="2012" name="Biochemistry">
        <title>Crystal structure of the C-terminal globular domain of oligosaccharyltransferase from Archaeoglobus fulgidus at 1.75 A resolution.</title>
        <authorList>
            <person name="Matsumoto S."/>
            <person name="Igura M."/>
            <person name="Nyirenda J."/>
            <person name="Matsumoto M."/>
            <person name="Yuzawa S."/>
            <person name="Noda N."/>
            <person name="Inagaki F."/>
            <person name="Kohda D."/>
        </authorList>
    </citation>
    <scope>X-RAY CRYSTALLOGRAPHY (1.75 ANGSTROMS) OF 430-591</scope>
    <scope>CATALYTIC ACTIVITY</scope>
    <scope>DOMAIN</scope>
    <scope>MUTAGENESIS OF GLU-521 AND LYS-531</scope>
</reference>
<gene>
    <name type="primary">aglB1</name>
    <name type="ordered locus">AF_0329</name>
</gene>
<keyword id="KW-0002">3D-structure</keyword>
<keyword id="KW-1003">Cell membrane</keyword>
<keyword id="KW-0328">Glycosyltransferase</keyword>
<keyword id="KW-0460">Magnesium</keyword>
<keyword id="KW-0464">Manganese</keyword>
<keyword id="KW-0472">Membrane</keyword>
<keyword id="KW-0479">Metal-binding</keyword>
<keyword id="KW-1185">Reference proteome</keyword>
<keyword id="KW-0808">Transferase</keyword>
<keyword id="KW-0812">Transmembrane</keyword>
<keyword id="KW-1133">Transmembrane helix</keyword>
<protein>
    <recommendedName>
        <fullName>Dolichyl-phosphooligosaccharide-protein glycotransferase 1</fullName>
        <ecNumber evidence="5">2.4.99.21</ecNumber>
    </recommendedName>
    <alternativeName>
        <fullName>Archaeal glycosylation protein B</fullName>
        <shortName>AglB-S1</shortName>
        <shortName>AglB-Short 1</shortName>
    </alternativeName>
    <alternativeName>
        <fullName>Oligosaccharyl transferase</fullName>
        <shortName>OST</shortName>
        <shortName>OTase</shortName>
    </alternativeName>
</protein>
<accession>O29918</accession>
<sequence>MDRKVLMLAVILFALAVRFQNFGEIFDSGIYYTGYDSYYHMRLVEVMVKESFRPDYDYYINYPFGLKITWPPLFDYILAFPGMLFGFHSSEIFAVFLPVILGVLSVVLICLTALQIVNNQTFALISAFIYAAAPVAVWKTVLGQADHHALVIFLFLLSAYLLLKDGVWKILAGLPMLFMALAWLGSPIYGALLAFSALVHFDRKALRLVAASYLIPAISFVLYPPVGISFFGLAAFLFVGSVVKGYEDRFRNATIYYIALSLATVLIIYFIPLPHFEFVKGGINYIFGANIYLPTISEARSLQIFEIISASGYIYFIFALISVLFFRNRFVLSMFFLSFILALMQLRFTEVLVVPSALLSAYLVSLVLERLEYPVFEKADEEEKSRRRKRKDRKVKQKNAEVEWKDHAVVAAFLVILAIPCIVVAVVPFDLTEDWKEALEWMRTSLEEQNYLNPYEKPEYSVMSWWDYGNWILYVSKKAVVCNNFQAGAVDAAKFFTAKSEDEAIKIAKKRGVRYVVTADEITMKDANNTKFPAIMRIAGYNVDLMTEGEILNFFNHTVLYRLHMENAENLTHFRLVKEFGDVKIFEVVGS</sequence>
<organism>
    <name type="scientific">Archaeoglobus fulgidus (strain ATCC 49558 / DSM 4304 / JCM 9628 / NBRC 100126 / VC-16)</name>
    <dbReference type="NCBI Taxonomy" id="224325"/>
    <lineage>
        <taxon>Archaea</taxon>
        <taxon>Methanobacteriati</taxon>
        <taxon>Methanobacteriota</taxon>
        <taxon>Archaeoglobi</taxon>
        <taxon>Archaeoglobales</taxon>
        <taxon>Archaeoglobaceae</taxon>
        <taxon>Archaeoglobus</taxon>
    </lineage>
</organism>
<evidence type="ECO:0000250" key="1">
    <source>
        <dbReference type="UniProtKB" id="B9KDD4"/>
    </source>
</evidence>
<evidence type="ECO:0000250" key="2">
    <source>
        <dbReference type="UniProtKB" id="O29867"/>
    </source>
</evidence>
<evidence type="ECO:0000250" key="3">
    <source>
        <dbReference type="UniProtKB" id="Q2EMT4"/>
    </source>
</evidence>
<evidence type="ECO:0000255" key="4"/>
<evidence type="ECO:0000269" key="5">
    <source>
    </source>
</evidence>
<evidence type="ECO:0000269" key="6">
    <source>
    </source>
</evidence>
<evidence type="ECO:0000305" key="7"/>
<evidence type="ECO:0000305" key="8">
    <source>
    </source>
</evidence>
<evidence type="ECO:0000305" key="9">
    <source>
    </source>
</evidence>
<evidence type="ECO:0007744" key="10">
    <source>
        <dbReference type="PDB" id="3VGP"/>
    </source>
</evidence>
<evidence type="ECO:0007829" key="11">
    <source>
        <dbReference type="PDB" id="3VGP"/>
    </source>
</evidence>
<dbReference type="EC" id="2.4.99.21" evidence="5"/>
<dbReference type="EMBL" id="AE000782">
    <property type="protein sequence ID" value="AAB90907.1"/>
    <property type="molecule type" value="Genomic_DNA"/>
</dbReference>
<dbReference type="PIR" id="A69291">
    <property type="entry name" value="A69291"/>
</dbReference>
<dbReference type="RefSeq" id="WP_010877836.1">
    <property type="nucleotide sequence ID" value="NC_000917.1"/>
</dbReference>
<dbReference type="PDB" id="3VGP">
    <property type="method" value="X-ray"/>
    <property type="resolution" value="1.75 A"/>
    <property type="chains" value="A=430-591"/>
</dbReference>
<dbReference type="PDBsum" id="3VGP"/>
<dbReference type="SMR" id="O29918"/>
<dbReference type="STRING" id="224325.AF_0329"/>
<dbReference type="CAZy" id="GT66">
    <property type="family name" value="Glycosyltransferase Family 66"/>
</dbReference>
<dbReference type="PaxDb" id="224325-AF_0329"/>
<dbReference type="DNASU" id="1483543"/>
<dbReference type="EnsemblBacteria" id="AAB90907">
    <property type="protein sequence ID" value="AAB90907"/>
    <property type="gene ID" value="AF_0329"/>
</dbReference>
<dbReference type="GeneID" id="24793868"/>
<dbReference type="KEGG" id="afu:AF_0329"/>
<dbReference type="eggNOG" id="arCOG02043">
    <property type="taxonomic scope" value="Archaea"/>
</dbReference>
<dbReference type="HOGENOM" id="CLU_008803_0_0_2"/>
<dbReference type="OrthoDB" id="82393at2157"/>
<dbReference type="PhylomeDB" id="O29918"/>
<dbReference type="BRENDA" id="2.4.99.18">
    <property type="organism ID" value="414"/>
</dbReference>
<dbReference type="UniPathway" id="UPA00378"/>
<dbReference type="EvolutionaryTrace" id="O29918"/>
<dbReference type="Proteomes" id="UP000002199">
    <property type="component" value="Chromosome"/>
</dbReference>
<dbReference type="GO" id="GO:0005886">
    <property type="term" value="C:plasma membrane"/>
    <property type="evidence" value="ECO:0007669"/>
    <property type="project" value="UniProtKB-SubCell"/>
</dbReference>
<dbReference type="GO" id="GO:0046872">
    <property type="term" value="F:metal ion binding"/>
    <property type="evidence" value="ECO:0007669"/>
    <property type="project" value="UniProtKB-KW"/>
</dbReference>
<dbReference type="GO" id="GO:0004576">
    <property type="term" value="F:oligosaccharyl transferase activity"/>
    <property type="evidence" value="ECO:0007669"/>
    <property type="project" value="InterPro"/>
</dbReference>
<dbReference type="GO" id="GO:0006486">
    <property type="term" value="P:protein glycosylation"/>
    <property type="evidence" value="ECO:0007669"/>
    <property type="project" value="UniProtKB-UniPathway"/>
</dbReference>
<dbReference type="Gene3D" id="3.40.50.12610">
    <property type="match status" value="1"/>
</dbReference>
<dbReference type="InterPro" id="IPR054479">
    <property type="entry name" value="AglB-like_core"/>
</dbReference>
<dbReference type="InterPro" id="IPR003674">
    <property type="entry name" value="Oligo_trans_STT3"/>
</dbReference>
<dbReference type="InterPro" id="IPR048307">
    <property type="entry name" value="STT3_N"/>
</dbReference>
<dbReference type="PANTHER" id="PTHR13872">
    <property type="entry name" value="DOLICHYL-DIPHOSPHOOLIGOSACCHARIDE--PROTEIN GLYCOSYLTRANSFERASE SUBUNIT"/>
    <property type="match status" value="1"/>
</dbReference>
<dbReference type="PANTHER" id="PTHR13872:SF1">
    <property type="entry name" value="DOLICHYL-DIPHOSPHOOLIGOSACCHARIDE--PROTEIN GLYCOSYLTRANSFERASE SUBUNIT STT3B"/>
    <property type="match status" value="1"/>
</dbReference>
<dbReference type="Pfam" id="PF22627">
    <property type="entry name" value="AglB_core-like"/>
    <property type="match status" value="1"/>
</dbReference>
<dbReference type="Pfam" id="PF02516">
    <property type="entry name" value="STT3"/>
    <property type="match status" value="1"/>
</dbReference>
<comment type="function">
    <text evidence="6">Oligosaccharyl transferase (OST) that catalyzes the initial transfer of a defined glycan (a GalNAc-linked heptasaccharide composed of 4 Hex, 3 dHex and a sulfate for A.fulgidus AglB-S) from the lipid carrier dolichol-monophosphate to an asparagine residue within an Asn-X-Ser/Thr consensus motif in nascent polypeptide chains, the first step in protein N-glycosylation.</text>
</comment>
<comment type="catalytic activity">
    <reaction evidence="5">
        <text>an archaeal dolichyl phosphooligosaccharide + [protein]-L-asparagine = an archaeal dolichyl phosphate + a glycoprotein with the oligosaccharide chain attached by N-beta-D-glycosyl linkage to a protein L-asparagine.</text>
        <dbReference type="EC" id="2.4.99.21"/>
    </reaction>
</comment>
<comment type="cofactor">
    <cofactor evidence="2">
        <name>Mn(2+)</name>
        <dbReference type="ChEBI" id="CHEBI:29035"/>
    </cofactor>
    <cofactor evidence="2">
        <name>Mg(2+)</name>
        <dbReference type="ChEBI" id="CHEBI:18420"/>
    </cofactor>
    <cofactor evidence="2">
        <name>Zn(2+)</name>
        <dbReference type="ChEBI" id="CHEBI:29105"/>
    </cofactor>
</comment>
<comment type="pathway">
    <text evidence="9">Protein modification; protein glycosylation.</text>
</comment>
<comment type="subcellular location">
    <subcellularLocation>
        <location evidence="3">Cell membrane</location>
        <topology evidence="3">Multi-pass membrane protein</topology>
    </subcellularLocation>
</comment>
<comment type="domain">
    <text evidence="8">Despite low primary sequence conservation between eukaryotic catalytic subunits and bacterial and archaeal single subunit OSTs (ssOST), structural comparison revealed several common motifs at spatially equivalent positions, like the DXD motif 1 on the external loop 1 and the DXD motif 2 on the external loop 2 involved in binding of the metal ion cofactor and the carboxamide group of the acceptor asparagine, the conserved Glu residue of the TIXE/SVSE motif on the external loop 5 involved in catalysis, as well as the WWDYG and the DK/MI motifs in the globular domain that define the binding pocket for the +2 Ser/Thr of the acceptor sequon. In bacterial ssOSTs, an Arg residue was found to interact with a negatively charged side chain at the -2 position of the sequon. This Arg is conserved in bacterial enzymes and correlates with an extended sequon requirement (Asp-X-Asn-X-Ser/Thr) for bacterial N-glycosylation.</text>
</comment>
<comment type="similarity">
    <text evidence="7">Belongs to the STT3 family.</text>
</comment>
<proteinExistence type="evidence at protein level"/>
<name>AGLB1_ARCFU</name>